<proteinExistence type="inferred from homology"/>
<protein>
    <recommendedName>
        <fullName evidence="1">Protein translocase subunit SecA</fullName>
        <ecNumber evidence="1">7.4.2.8</ecNumber>
    </recommendedName>
</protein>
<dbReference type="EC" id="7.4.2.8" evidence="1"/>
<dbReference type="EMBL" id="CP000110">
    <property type="protein sequence ID" value="ABB33860.1"/>
    <property type="molecule type" value="Genomic_DNA"/>
</dbReference>
<dbReference type="RefSeq" id="WP_011363120.1">
    <property type="nucleotide sequence ID" value="NC_007516.1"/>
</dbReference>
<dbReference type="SMR" id="Q3ANH2"/>
<dbReference type="STRING" id="110662.Syncc9605_0081"/>
<dbReference type="KEGG" id="syd:Syncc9605_0081"/>
<dbReference type="eggNOG" id="COG0653">
    <property type="taxonomic scope" value="Bacteria"/>
</dbReference>
<dbReference type="HOGENOM" id="CLU_005314_3_0_3"/>
<dbReference type="OrthoDB" id="9805579at2"/>
<dbReference type="GO" id="GO:0031522">
    <property type="term" value="C:cell envelope Sec protein transport complex"/>
    <property type="evidence" value="ECO:0007669"/>
    <property type="project" value="TreeGrafter"/>
</dbReference>
<dbReference type="GO" id="GO:0005829">
    <property type="term" value="C:cytosol"/>
    <property type="evidence" value="ECO:0007669"/>
    <property type="project" value="TreeGrafter"/>
</dbReference>
<dbReference type="GO" id="GO:0031676">
    <property type="term" value="C:plasma membrane-derived thylakoid membrane"/>
    <property type="evidence" value="ECO:0007669"/>
    <property type="project" value="UniProtKB-SubCell"/>
</dbReference>
<dbReference type="GO" id="GO:0005524">
    <property type="term" value="F:ATP binding"/>
    <property type="evidence" value="ECO:0007669"/>
    <property type="project" value="UniProtKB-UniRule"/>
</dbReference>
<dbReference type="GO" id="GO:0008564">
    <property type="term" value="F:protein-exporting ATPase activity"/>
    <property type="evidence" value="ECO:0007669"/>
    <property type="project" value="UniProtKB-EC"/>
</dbReference>
<dbReference type="GO" id="GO:0065002">
    <property type="term" value="P:intracellular protein transmembrane transport"/>
    <property type="evidence" value="ECO:0007669"/>
    <property type="project" value="UniProtKB-UniRule"/>
</dbReference>
<dbReference type="GO" id="GO:0017038">
    <property type="term" value="P:protein import"/>
    <property type="evidence" value="ECO:0007669"/>
    <property type="project" value="InterPro"/>
</dbReference>
<dbReference type="GO" id="GO:0006605">
    <property type="term" value="P:protein targeting"/>
    <property type="evidence" value="ECO:0007669"/>
    <property type="project" value="UniProtKB-UniRule"/>
</dbReference>
<dbReference type="GO" id="GO:0043952">
    <property type="term" value="P:protein transport by the Sec complex"/>
    <property type="evidence" value="ECO:0007669"/>
    <property type="project" value="TreeGrafter"/>
</dbReference>
<dbReference type="CDD" id="cd17928">
    <property type="entry name" value="DEXDc_SecA"/>
    <property type="match status" value="1"/>
</dbReference>
<dbReference type="CDD" id="cd18803">
    <property type="entry name" value="SF2_C_secA"/>
    <property type="match status" value="1"/>
</dbReference>
<dbReference type="FunFam" id="3.90.1440.10:FF:000003">
    <property type="entry name" value="Preprotein translocase SecA subunit"/>
    <property type="match status" value="1"/>
</dbReference>
<dbReference type="FunFam" id="3.40.50.300:FF:000429">
    <property type="entry name" value="Preprotein translocase subunit SecA"/>
    <property type="match status" value="1"/>
</dbReference>
<dbReference type="FunFam" id="1.10.3060.10:FF:000003">
    <property type="entry name" value="Protein translocase subunit SecA"/>
    <property type="match status" value="1"/>
</dbReference>
<dbReference type="FunFam" id="3.40.50.300:FF:000334">
    <property type="entry name" value="Protein translocase subunit SecA"/>
    <property type="match status" value="1"/>
</dbReference>
<dbReference type="Gene3D" id="1.10.3060.10">
    <property type="entry name" value="Helical scaffold and wing domains of SecA"/>
    <property type="match status" value="1"/>
</dbReference>
<dbReference type="Gene3D" id="3.40.50.300">
    <property type="entry name" value="P-loop containing nucleotide triphosphate hydrolases"/>
    <property type="match status" value="2"/>
</dbReference>
<dbReference type="Gene3D" id="3.90.1440.10">
    <property type="entry name" value="SecA, preprotein cross-linking domain"/>
    <property type="match status" value="1"/>
</dbReference>
<dbReference type="HAMAP" id="MF_01382">
    <property type="entry name" value="SecA"/>
    <property type="match status" value="1"/>
</dbReference>
<dbReference type="InterPro" id="IPR014001">
    <property type="entry name" value="Helicase_ATP-bd"/>
</dbReference>
<dbReference type="InterPro" id="IPR027417">
    <property type="entry name" value="P-loop_NTPase"/>
</dbReference>
<dbReference type="InterPro" id="IPR000185">
    <property type="entry name" value="SecA"/>
</dbReference>
<dbReference type="InterPro" id="IPR020937">
    <property type="entry name" value="SecA_CS"/>
</dbReference>
<dbReference type="InterPro" id="IPR011115">
    <property type="entry name" value="SecA_DEAD"/>
</dbReference>
<dbReference type="InterPro" id="IPR014018">
    <property type="entry name" value="SecA_motor_DEAD"/>
</dbReference>
<dbReference type="InterPro" id="IPR011130">
    <property type="entry name" value="SecA_preprotein_X-link_dom"/>
</dbReference>
<dbReference type="InterPro" id="IPR044722">
    <property type="entry name" value="SecA_SF2_C"/>
</dbReference>
<dbReference type="InterPro" id="IPR011116">
    <property type="entry name" value="SecA_Wing/Scaffold"/>
</dbReference>
<dbReference type="InterPro" id="IPR036266">
    <property type="entry name" value="SecA_Wing/Scaffold_sf"/>
</dbReference>
<dbReference type="InterPro" id="IPR036670">
    <property type="entry name" value="SecA_X-link_sf"/>
</dbReference>
<dbReference type="NCBIfam" id="TIGR00963">
    <property type="entry name" value="secA"/>
    <property type="match status" value="1"/>
</dbReference>
<dbReference type="PANTHER" id="PTHR30612:SF0">
    <property type="entry name" value="CHLOROPLAST PROTEIN-TRANSPORTING ATPASE"/>
    <property type="match status" value="1"/>
</dbReference>
<dbReference type="PANTHER" id="PTHR30612">
    <property type="entry name" value="SECA INNER MEMBRANE COMPONENT OF SEC PROTEIN SECRETION SYSTEM"/>
    <property type="match status" value="1"/>
</dbReference>
<dbReference type="Pfam" id="PF21090">
    <property type="entry name" value="P-loop_SecA"/>
    <property type="match status" value="1"/>
</dbReference>
<dbReference type="Pfam" id="PF07517">
    <property type="entry name" value="SecA_DEAD"/>
    <property type="match status" value="1"/>
</dbReference>
<dbReference type="Pfam" id="PF01043">
    <property type="entry name" value="SecA_PP_bind"/>
    <property type="match status" value="1"/>
</dbReference>
<dbReference type="Pfam" id="PF07516">
    <property type="entry name" value="SecA_SW"/>
    <property type="match status" value="1"/>
</dbReference>
<dbReference type="PRINTS" id="PR00906">
    <property type="entry name" value="SECA"/>
</dbReference>
<dbReference type="SMART" id="SM00957">
    <property type="entry name" value="SecA_DEAD"/>
    <property type="match status" value="1"/>
</dbReference>
<dbReference type="SMART" id="SM00958">
    <property type="entry name" value="SecA_PP_bind"/>
    <property type="match status" value="1"/>
</dbReference>
<dbReference type="SUPFAM" id="SSF81886">
    <property type="entry name" value="Helical scaffold and wing domains of SecA"/>
    <property type="match status" value="1"/>
</dbReference>
<dbReference type="SUPFAM" id="SSF52540">
    <property type="entry name" value="P-loop containing nucleoside triphosphate hydrolases"/>
    <property type="match status" value="2"/>
</dbReference>
<dbReference type="SUPFAM" id="SSF81767">
    <property type="entry name" value="Pre-protein crosslinking domain of SecA"/>
    <property type="match status" value="1"/>
</dbReference>
<dbReference type="PROSITE" id="PS01312">
    <property type="entry name" value="SECA"/>
    <property type="match status" value="1"/>
</dbReference>
<dbReference type="PROSITE" id="PS51196">
    <property type="entry name" value="SECA_MOTOR_DEAD"/>
    <property type="match status" value="1"/>
</dbReference>
<sequence>MLKLLLGDPNARKLKRYQPIVSDIQLLEEEIAPLSDDELRGRTAAFQERLANAGSLANQRPILDEILPEAFAVVREAGKRVLGMRHFDVQLIGGMVLHEGQIAEMKTGEGKTLVATLPSYLNALTGRGVHVVTVNDYLARRDAEWMGQVHRFLGLSVGLIQQDMRPEERRRNYNCDITYATNSELGFDYLRDNMAADISEVVQREFQYCVIDEVDSILIDEARTPLIISGQVERPQEKYQQAAEVANALARAAELSKDGIDPEGDYEVDEKQRSCTLTDEGFAKAEQMLGVADLFNPQDPWAHYITNALKAKELFVKDVNYIVRDGEAVIVDEFTGRVMPGRRWSDGQHQAIEAKEALAIQSETQTLASITYQNFFLLYPRLAGMTGTAKTEEVEFEKTYKLETTIVPTNRVRARQDWADQVYKTEAAKWRAVANETAEIHKNGRPVLVGTTSVEKSELLSSLLAEQEIPHNLLNAKPENVERESEIVAQAGRAGAVTIATNMAGRGTDIILGGNSDYMARLKLREVLLGRLVKPEEDHTPPVPLQRSAPGGFSDAAAPSLPRSGESLYPCPLTDDTDQALGQLARDLVKAWGDRALTVIELEERIATAAEKAPTEAPQIQALREAIARVKGEYDAVVKQEESRVREAGGLHVIGTERHESRRVDNQLRGRAGRQGDPGSTRFFLSLGDNLLRIFGGDRVAGLMNAFRVEEDMPIESGMLTRSLEGAQKKVETYYYDIRKQVFEYDEVMNNQRRAVYSERRRVLDGRALKKQVIGYGERTMGEIVEAYVNPDLPPEEWDLDQLVGKVKEFIYLLEDLTPDQVQGLGMEELKAFLQEQLRNAYDLKEGQIEQQRPGLMREAERFFILQQIDTLWREHLQAMDALRESVGLRGYGQKDPLIEYKNEGYDMFLEMMTNMRRNVIYSMFMFQPQAPKN</sequence>
<keyword id="KW-0067">ATP-binding</keyword>
<keyword id="KW-0997">Cell inner membrane</keyword>
<keyword id="KW-1003">Cell membrane</keyword>
<keyword id="KW-0963">Cytoplasm</keyword>
<keyword id="KW-0472">Membrane</keyword>
<keyword id="KW-0547">Nucleotide-binding</keyword>
<keyword id="KW-0653">Protein transport</keyword>
<keyword id="KW-0793">Thylakoid</keyword>
<keyword id="KW-1278">Translocase</keyword>
<keyword id="KW-0811">Translocation</keyword>
<keyword id="KW-0813">Transport</keyword>
<reference key="1">
    <citation type="submission" date="2005-07" db="EMBL/GenBank/DDBJ databases">
        <title>Complete sequence of Synechococcus sp. CC9605.</title>
        <authorList>
            <consortium name="US DOE Joint Genome Institute"/>
            <person name="Copeland A."/>
            <person name="Lucas S."/>
            <person name="Lapidus A."/>
            <person name="Barry K."/>
            <person name="Detter J.C."/>
            <person name="Glavina T."/>
            <person name="Hammon N."/>
            <person name="Israni S."/>
            <person name="Pitluck S."/>
            <person name="Schmutz J."/>
            <person name="Martinez M."/>
            <person name="Larimer F."/>
            <person name="Land M."/>
            <person name="Kyrpides N."/>
            <person name="Ivanova N."/>
            <person name="Richardson P."/>
        </authorList>
    </citation>
    <scope>NUCLEOTIDE SEQUENCE [LARGE SCALE GENOMIC DNA]</scope>
    <source>
        <strain>CC9605</strain>
    </source>
</reference>
<comment type="function">
    <text evidence="1">Part of the Sec protein translocase complex. Interacts with the SecYEG preprotein conducting channel. Has a central role in coupling the hydrolysis of ATP to the transfer of proteins into and across the cell membrane, serving as an ATP-driven molecular motor driving the stepwise translocation of polypeptide chains across the membrane.</text>
</comment>
<comment type="function">
    <text evidence="1">Probably participates in protein translocation into and across both the cytoplasmic and thylakoid membranes in cyanobacterial cells.</text>
</comment>
<comment type="catalytic activity">
    <reaction evidence="1">
        <text>ATP + H2O + cellular proteinSide 1 = ADP + phosphate + cellular proteinSide 2.</text>
        <dbReference type="EC" id="7.4.2.8"/>
    </reaction>
</comment>
<comment type="subunit">
    <text evidence="1">Monomer and homodimer. Part of the essential Sec protein translocation apparatus which comprises SecA, SecYEG and auxiliary proteins SecDF. Other proteins may also be involved.</text>
</comment>
<comment type="subcellular location">
    <subcellularLocation>
        <location evidence="1">Cell inner membrane</location>
        <topology evidence="1">Peripheral membrane protein</topology>
        <orientation evidence="1">Cytoplasmic side</orientation>
    </subcellularLocation>
    <subcellularLocation>
        <location evidence="1">Cellular thylakoid membrane</location>
        <topology evidence="1">Peripheral membrane protein</topology>
        <orientation evidence="1">Cytoplasmic side</orientation>
    </subcellularLocation>
    <subcellularLocation>
        <location evidence="1">Cytoplasm</location>
    </subcellularLocation>
</comment>
<comment type="similarity">
    <text evidence="1">Belongs to the SecA family.</text>
</comment>
<organism>
    <name type="scientific">Synechococcus sp. (strain CC9605)</name>
    <dbReference type="NCBI Taxonomy" id="110662"/>
    <lineage>
        <taxon>Bacteria</taxon>
        <taxon>Bacillati</taxon>
        <taxon>Cyanobacteriota</taxon>
        <taxon>Cyanophyceae</taxon>
        <taxon>Synechococcales</taxon>
        <taxon>Synechococcaceae</taxon>
        <taxon>Synechococcus</taxon>
    </lineage>
</organism>
<gene>
    <name evidence="1" type="primary">secA</name>
    <name type="ordered locus">Syncc9605_0081</name>
</gene>
<name>SECA_SYNSC</name>
<evidence type="ECO:0000255" key="1">
    <source>
        <dbReference type="HAMAP-Rule" id="MF_01382"/>
    </source>
</evidence>
<evidence type="ECO:0000256" key="2">
    <source>
        <dbReference type="SAM" id="MobiDB-lite"/>
    </source>
</evidence>
<feature type="chain" id="PRO_0000318469" description="Protein translocase subunit SecA">
    <location>
        <begin position="1"/>
        <end position="934"/>
    </location>
</feature>
<feature type="region of interest" description="Disordered" evidence="2">
    <location>
        <begin position="535"/>
        <end position="565"/>
    </location>
</feature>
<feature type="binding site" evidence="1">
    <location>
        <position position="90"/>
    </location>
    <ligand>
        <name>ATP</name>
        <dbReference type="ChEBI" id="CHEBI:30616"/>
    </ligand>
</feature>
<feature type="binding site" evidence="1">
    <location>
        <begin position="108"/>
        <end position="112"/>
    </location>
    <ligand>
        <name>ATP</name>
        <dbReference type="ChEBI" id="CHEBI:30616"/>
    </ligand>
</feature>
<feature type="binding site" evidence="1">
    <location>
        <position position="509"/>
    </location>
    <ligand>
        <name>ATP</name>
        <dbReference type="ChEBI" id="CHEBI:30616"/>
    </ligand>
</feature>
<accession>Q3ANH2</accession>